<evidence type="ECO:0000250" key="1"/>
<evidence type="ECO:0000255" key="2"/>
<evidence type="ECO:0000305" key="3"/>
<feature type="signal peptide" evidence="2">
    <location>
        <begin position="1"/>
        <end position="18"/>
    </location>
</feature>
<feature type="chain" id="PRO_0000231031" description="Deoxyribonuclease-1-like 1">
    <location>
        <begin position="19"/>
        <end position="302"/>
    </location>
</feature>
<feature type="active site" evidence="1">
    <location>
        <position position="97"/>
    </location>
</feature>
<feature type="active site" evidence="1">
    <location>
        <position position="148"/>
    </location>
</feature>
<feature type="glycosylation site" description="N-linked (GlcNAc...) asparagine" evidence="2">
    <location>
        <position position="261"/>
    </location>
</feature>
<feature type="disulfide bond" description="Essential for enzymatic activity" evidence="1">
    <location>
        <begin position="187"/>
        <end position="224"/>
    </location>
</feature>
<proteinExistence type="evidence at transcript level"/>
<dbReference type="EC" id="3.1.21.-"/>
<dbReference type="EMBL" id="DQ116781">
    <property type="protein sequence ID" value="AAZ94274.1"/>
    <property type="molecule type" value="mRNA"/>
</dbReference>
<dbReference type="SMR" id="Q2QDF1"/>
<dbReference type="GlyCosmos" id="Q2QDF1">
    <property type="glycosylation" value="1 site, No reported glycans"/>
</dbReference>
<dbReference type="GO" id="GO:0005783">
    <property type="term" value="C:endoplasmic reticulum"/>
    <property type="evidence" value="ECO:0007669"/>
    <property type="project" value="UniProtKB-SubCell"/>
</dbReference>
<dbReference type="GO" id="GO:0005634">
    <property type="term" value="C:nucleus"/>
    <property type="evidence" value="ECO:0007669"/>
    <property type="project" value="TreeGrafter"/>
</dbReference>
<dbReference type="GO" id="GO:0004530">
    <property type="term" value="F:deoxyribonuclease I activity"/>
    <property type="evidence" value="ECO:0007669"/>
    <property type="project" value="TreeGrafter"/>
</dbReference>
<dbReference type="GO" id="GO:0003677">
    <property type="term" value="F:DNA binding"/>
    <property type="evidence" value="ECO:0007669"/>
    <property type="project" value="TreeGrafter"/>
</dbReference>
<dbReference type="GO" id="GO:0006308">
    <property type="term" value="P:DNA catabolic process"/>
    <property type="evidence" value="ECO:0007669"/>
    <property type="project" value="InterPro"/>
</dbReference>
<dbReference type="CDD" id="cd10282">
    <property type="entry name" value="DNase1"/>
    <property type="match status" value="1"/>
</dbReference>
<dbReference type="FunFam" id="3.60.10.10:FF:000007">
    <property type="entry name" value="Deoxyribonuclease"/>
    <property type="match status" value="1"/>
</dbReference>
<dbReference type="Gene3D" id="3.60.10.10">
    <property type="entry name" value="Endonuclease/exonuclease/phosphatase"/>
    <property type="match status" value="1"/>
</dbReference>
<dbReference type="InterPro" id="IPR018057">
    <property type="entry name" value="Deoxyribonuclease-1_AS"/>
</dbReference>
<dbReference type="InterPro" id="IPR016202">
    <property type="entry name" value="DNase_I"/>
</dbReference>
<dbReference type="InterPro" id="IPR033125">
    <property type="entry name" value="DNASE_I_2"/>
</dbReference>
<dbReference type="InterPro" id="IPR036691">
    <property type="entry name" value="Endo/exonu/phosph_ase_sf"/>
</dbReference>
<dbReference type="InterPro" id="IPR005135">
    <property type="entry name" value="Endo/exonuclease/phosphatase"/>
</dbReference>
<dbReference type="PANTHER" id="PTHR11371">
    <property type="entry name" value="DEOXYRIBONUCLEASE"/>
    <property type="match status" value="1"/>
</dbReference>
<dbReference type="PANTHER" id="PTHR11371:SF28">
    <property type="entry name" value="DEOXYRIBONUCLEASE-1-LIKE 1"/>
    <property type="match status" value="1"/>
</dbReference>
<dbReference type="Pfam" id="PF03372">
    <property type="entry name" value="Exo_endo_phos"/>
    <property type="match status" value="1"/>
</dbReference>
<dbReference type="PIRSF" id="PIRSF000988">
    <property type="entry name" value="DNase_I_euk"/>
    <property type="match status" value="1"/>
</dbReference>
<dbReference type="PRINTS" id="PR00130">
    <property type="entry name" value="DNASEI"/>
</dbReference>
<dbReference type="SMART" id="SM00476">
    <property type="entry name" value="DNaseIc"/>
    <property type="match status" value="1"/>
</dbReference>
<dbReference type="SUPFAM" id="SSF56219">
    <property type="entry name" value="DNase I-like"/>
    <property type="match status" value="1"/>
</dbReference>
<dbReference type="PROSITE" id="PS00919">
    <property type="entry name" value="DNASE_I_1"/>
    <property type="match status" value="1"/>
</dbReference>
<dbReference type="PROSITE" id="PS00918">
    <property type="entry name" value="DNASE_I_2"/>
    <property type="match status" value="1"/>
</dbReference>
<name>DNSL1_CHLAE</name>
<gene>
    <name type="primary">DNASE1L1</name>
</gene>
<protein>
    <recommendedName>
        <fullName>Deoxyribonuclease-1-like 1</fullName>
        <ecNumber>3.1.21.-</ecNumber>
    </recommendedName>
    <alternativeName>
        <fullName>DNase X</fullName>
    </alternativeName>
    <alternativeName>
        <fullName>Deoxyribonuclease I-like 1</fullName>
        <shortName>DNase I-like 1</shortName>
    </alternativeName>
</protein>
<accession>Q2QDF1</accession>
<keyword id="KW-1015">Disulfide bond</keyword>
<keyword id="KW-0255">Endonuclease</keyword>
<keyword id="KW-0256">Endoplasmic reticulum</keyword>
<keyword id="KW-0325">Glycoprotein</keyword>
<keyword id="KW-0378">Hydrolase</keyword>
<keyword id="KW-0540">Nuclease</keyword>
<keyword id="KW-0732">Signal</keyword>
<comment type="subcellular location">
    <subcellularLocation>
        <location evidence="1">Endoplasmic reticulum</location>
    </subcellularLocation>
</comment>
<comment type="similarity">
    <text evidence="3">Belongs to the DNase I family.</text>
</comment>
<organism>
    <name type="scientific">Chlorocebus aethiops</name>
    <name type="common">Green monkey</name>
    <name type="synonym">Cercopithecus aethiops</name>
    <dbReference type="NCBI Taxonomy" id="9534"/>
    <lineage>
        <taxon>Eukaryota</taxon>
        <taxon>Metazoa</taxon>
        <taxon>Chordata</taxon>
        <taxon>Craniata</taxon>
        <taxon>Vertebrata</taxon>
        <taxon>Euteleostomi</taxon>
        <taxon>Mammalia</taxon>
        <taxon>Eutheria</taxon>
        <taxon>Euarchontoglires</taxon>
        <taxon>Primates</taxon>
        <taxon>Haplorrhini</taxon>
        <taxon>Catarrhini</taxon>
        <taxon>Cercopithecidae</taxon>
        <taxon>Cercopithecinae</taxon>
        <taxon>Chlorocebus</taxon>
    </lineage>
</organism>
<reference key="1">
    <citation type="journal article" date="2005" name="Biochem. J.">
        <title>Physical and biochemical properties of mammalian DNase X proteins: non-AUG translation initiation of porcine and bovine mRNAs for DNase X.</title>
        <authorList>
            <person name="Shiokawa D."/>
            <person name="Shika Y."/>
            <person name="Saito K."/>
            <person name="Yamazaki K."/>
            <person name="Tanuma S."/>
        </authorList>
    </citation>
    <scope>NUCLEOTIDE SEQUENCE [MRNA]</scope>
</reference>
<sequence>MHYPTALLFLILVNGAQAFRICAFNAQRLTLAKVAREQVMDTLVRILARCDIMVLQEVVDSSGSAIPLLLRELNRFDASGPYSTLSSPQLGRTTYVETYVYFYRSHKTQVLSSYVYNDEDDVFAREPFVAQFSLPSDVLPSLVLVPLHTTPKAVEKELNALYDVFLEVSQHWQSKDVILLGDFNADCASLTKKRLDKLELRTEPGFHWVIADGEDTTVRASTHCAYDRIVLHGERCRSLLHTAAAFDFPTTFQLTEEEALNISDHYPVEVELKLSQAHSVQPLSLTVLLLLSLLSPQLCPAT</sequence>